<accession>A3MFQ4</accession>
<protein>
    <recommendedName>
        <fullName evidence="1">Indole-3-glycerol phosphate synthase</fullName>
        <shortName evidence="1">IGPS</shortName>
        <ecNumber evidence="1">4.1.1.48</ecNumber>
    </recommendedName>
</protein>
<organism>
    <name type="scientific">Burkholderia mallei (strain NCTC 10247)</name>
    <dbReference type="NCBI Taxonomy" id="320389"/>
    <lineage>
        <taxon>Bacteria</taxon>
        <taxon>Pseudomonadati</taxon>
        <taxon>Pseudomonadota</taxon>
        <taxon>Betaproteobacteria</taxon>
        <taxon>Burkholderiales</taxon>
        <taxon>Burkholderiaceae</taxon>
        <taxon>Burkholderia</taxon>
        <taxon>pseudomallei group</taxon>
    </lineage>
</organism>
<sequence>MSDILDKIIAVKREEIAAALESAPLEELKVQASARDSRDFVGALRDKHAAGHAAVIAEVKKASPSKGVLREHFVPADIARSYAQHGAACLSVLTDERFFQGSARYLEQARAACTLPVLRKDFIVDAYQLLEARAMGADAILLIAAALDTPLMIDLEAYAHSLGLAVLVEVHNRGELDEALKLKTPFVGINNRNLRTFETTIDTTLGMLDAIPDDRIVVTESGILSRADVERMEAAGVHTFLVGEAFMRAENPGAELARMFF</sequence>
<reference key="1">
    <citation type="journal article" date="2010" name="Genome Biol. Evol.">
        <title>Continuing evolution of Burkholderia mallei through genome reduction and large-scale rearrangements.</title>
        <authorList>
            <person name="Losada L."/>
            <person name="Ronning C.M."/>
            <person name="DeShazer D."/>
            <person name="Woods D."/>
            <person name="Fedorova N."/>
            <person name="Kim H.S."/>
            <person name="Shabalina S.A."/>
            <person name="Pearson T.R."/>
            <person name="Brinkac L."/>
            <person name="Tan P."/>
            <person name="Nandi T."/>
            <person name="Crabtree J."/>
            <person name="Badger J."/>
            <person name="Beckstrom-Sternberg S."/>
            <person name="Saqib M."/>
            <person name="Schutzer S.E."/>
            <person name="Keim P."/>
            <person name="Nierman W.C."/>
        </authorList>
    </citation>
    <scope>NUCLEOTIDE SEQUENCE [LARGE SCALE GENOMIC DNA]</scope>
    <source>
        <strain>NCTC 10247</strain>
    </source>
</reference>
<feature type="chain" id="PRO_1000018454" description="Indole-3-glycerol phosphate synthase">
    <location>
        <begin position="1"/>
        <end position="261"/>
    </location>
</feature>
<keyword id="KW-0028">Amino-acid biosynthesis</keyword>
<keyword id="KW-0057">Aromatic amino acid biosynthesis</keyword>
<keyword id="KW-0210">Decarboxylase</keyword>
<keyword id="KW-0456">Lyase</keyword>
<keyword id="KW-0822">Tryptophan biosynthesis</keyword>
<evidence type="ECO:0000255" key="1">
    <source>
        <dbReference type="HAMAP-Rule" id="MF_00134"/>
    </source>
</evidence>
<proteinExistence type="inferred from homology"/>
<name>TRPC_BURM7</name>
<comment type="catalytic activity">
    <reaction evidence="1">
        <text>1-(2-carboxyphenylamino)-1-deoxy-D-ribulose 5-phosphate + H(+) = (1S,2R)-1-C-(indol-3-yl)glycerol 3-phosphate + CO2 + H2O</text>
        <dbReference type="Rhea" id="RHEA:23476"/>
        <dbReference type="ChEBI" id="CHEBI:15377"/>
        <dbReference type="ChEBI" id="CHEBI:15378"/>
        <dbReference type="ChEBI" id="CHEBI:16526"/>
        <dbReference type="ChEBI" id="CHEBI:58613"/>
        <dbReference type="ChEBI" id="CHEBI:58866"/>
        <dbReference type="EC" id="4.1.1.48"/>
    </reaction>
</comment>
<comment type="pathway">
    <text evidence="1">Amino-acid biosynthesis; L-tryptophan biosynthesis; L-tryptophan from chorismate: step 4/5.</text>
</comment>
<comment type="similarity">
    <text evidence="1">Belongs to the TrpC family.</text>
</comment>
<gene>
    <name evidence="1" type="primary">trpC</name>
    <name type="ordered locus">BMA10247_A1913</name>
</gene>
<dbReference type="EC" id="4.1.1.48" evidence="1"/>
<dbReference type="EMBL" id="CP000547">
    <property type="protein sequence ID" value="ABO03008.1"/>
    <property type="molecule type" value="Genomic_DNA"/>
</dbReference>
<dbReference type="RefSeq" id="WP_004186826.1">
    <property type="nucleotide sequence ID" value="NZ_CP007801.1"/>
</dbReference>
<dbReference type="SMR" id="A3MFQ4"/>
<dbReference type="GeneID" id="92976776"/>
<dbReference type="KEGG" id="bmaz:BM44_4071"/>
<dbReference type="KEGG" id="bmn:BMA10247_A1913"/>
<dbReference type="PATRIC" id="fig|320389.8.peg.4631"/>
<dbReference type="UniPathway" id="UPA00035">
    <property type="reaction ID" value="UER00043"/>
</dbReference>
<dbReference type="GO" id="GO:0004425">
    <property type="term" value="F:indole-3-glycerol-phosphate synthase activity"/>
    <property type="evidence" value="ECO:0007669"/>
    <property type="project" value="UniProtKB-UniRule"/>
</dbReference>
<dbReference type="GO" id="GO:0004640">
    <property type="term" value="F:phosphoribosylanthranilate isomerase activity"/>
    <property type="evidence" value="ECO:0007669"/>
    <property type="project" value="TreeGrafter"/>
</dbReference>
<dbReference type="GO" id="GO:0000162">
    <property type="term" value="P:L-tryptophan biosynthetic process"/>
    <property type="evidence" value="ECO:0007669"/>
    <property type="project" value="UniProtKB-UniRule"/>
</dbReference>
<dbReference type="CDD" id="cd00331">
    <property type="entry name" value="IGPS"/>
    <property type="match status" value="1"/>
</dbReference>
<dbReference type="FunFam" id="3.20.20.70:FF:000024">
    <property type="entry name" value="Indole-3-glycerol phosphate synthase"/>
    <property type="match status" value="1"/>
</dbReference>
<dbReference type="Gene3D" id="3.20.20.70">
    <property type="entry name" value="Aldolase class I"/>
    <property type="match status" value="1"/>
</dbReference>
<dbReference type="HAMAP" id="MF_00134_B">
    <property type="entry name" value="IGPS_B"/>
    <property type="match status" value="1"/>
</dbReference>
<dbReference type="InterPro" id="IPR013785">
    <property type="entry name" value="Aldolase_TIM"/>
</dbReference>
<dbReference type="InterPro" id="IPR045186">
    <property type="entry name" value="Indole-3-glycerol_P_synth"/>
</dbReference>
<dbReference type="InterPro" id="IPR013798">
    <property type="entry name" value="Indole-3-glycerol_P_synth_dom"/>
</dbReference>
<dbReference type="InterPro" id="IPR001468">
    <property type="entry name" value="Indole-3-GlycerolPSynthase_CS"/>
</dbReference>
<dbReference type="InterPro" id="IPR011060">
    <property type="entry name" value="RibuloseP-bd_barrel"/>
</dbReference>
<dbReference type="NCBIfam" id="NF001373">
    <property type="entry name" value="PRK00278.1-6"/>
    <property type="match status" value="1"/>
</dbReference>
<dbReference type="NCBIfam" id="NF001377">
    <property type="entry name" value="PRK00278.2-4"/>
    <property type="match status" value="1"/>
</dbReference>
<dbReference type="PANTHER" id="PTHR22854:SF2">
    <property type="entry name" value="INDOLE-3-GLYCEROL-PHOSPHATE SYNTHASE"/>
    <property type="match status" value="1"/>
</dbReference>
<dbReference type="PANTHER" id="PTHR22854">
    <property type="entry name" value="TRYPTOPHAN BIOSYNTHESIS PROTEIN"/>
    <property type="match status" value="1"/>
</dbReference>
<dbReference type="Pfam" id="PF00218">
    <property type="entry name" value="IGPS"/>
    <property type="match status" value="1"/>
</dbReference>
<dbReference type="SUPFAM" id="SSF51366">
    <property type="entry name" value="Ribulose-phoshate binding barrel"/>
    <property type="match status" value="1"/>
</dbReference>
<dbReference type="PROSITE" id="PS00614">
    <property type="entry name" value="IGPS"/>
    <property type="match status" value="1"/>
</dbReference>